<accession>Q88NC4</accession>
<comment type="function">
    <text evidence="1">Catalyzes the oxidation of guanosine diphospho-D-mannose (GDP-D-mannose) to GDP-D-mannuronic acid, a precursor for alginate polymerization. The alginate layer causes a mucoid phenotype and provides a protective barrier against host immune defenses and antibiotics (By similarity).</text>
</comment>
<comment type="catalytic activity">
    <reaction>
        <text>GDP-alpha-D-mannose + 2 NAD(+) + H2O = GDP-alpha-D-mannuronate + 2 NADH + 3 H(+)</text>
        <dbReference type="Rhea" id="RHEA:21728"/>
        <dbReference type="ChEBI" id="CHEBI:15377"/>
        <dbReference type="ChEBI" id="CHEBI:15378"/>
        <dbReference type="ChEBI" id="CHEBI:57527"/>
        <dbReference type="ChEBI" id="CHEBI:57540"/>
        <dbReference type="ChEBI" id="CHEBI:57945"/>
        <dbReference type="ChEBI" id="CHEBI:84886"/>
        <dbReference type="EC" id="1.1.1.132"/>
    </reaction>
</comment>
<comment type="pathway">
    <text>Glycan biosynthesis; alginate biosynthesis.</text>
</comment>
<comment type="similarity">
    <text evidence="3">Belongs to the UDP-glucose/GDP-mannose dehydrogenase family.</text>
</comment>
<sequence>MRISIFGLGYVGAVCAGCLTARGHEVIGVDVSSTKIDLINQGKSPIVEPGLEALLQQGIANGRLRGTTDFAEAIRASDVSMICVGTPSKKNGDLGLEYIESVCREIGYVLRDTTRRHTIVVRSTVLPGTVKNVVIPILEDCSGKKAGVDFGVAVNPEFLRESTAIKDYDQPPMTVIGELDSASGDILQALYEELDAPIIRKPIEVAEMIKYTCNVWHATKVTFANEIGNIAKAVGVDGREVMDVVCQDKVLNLSQYYMRPGFAFGGSCLPKDVRALTYRAASLDVRAPLLDSLMRSNESQVQNAFELIEAHDKRKVALLGLSFKAGTDDLRESPLVELAERLIGKGYQLDIYDENVQYARVHGANKDYIESKIPHVSSLLNANLQQVIDNADIIVLGNRDEQFRALALQAPAGKQVIDLVGFMNKPTSTTARTEGICW</sequence>
<proteinExistence type="inferred from homology"/>
<gene>
    <name type="primary">algD</name>
    <name type="ordered locus">PP_1288</name>
</gene>
<organism>
    <name type="scientific">Pseudomonas putida (strain ATCC 47054 / DSM 6125 / CFBP 8728 / NCIMB 11950 / KT2440)</name>
    <dbReference type="NCBI Taxonomy" id="160488"/>
    <lineage>
        <taxon>Bacteria</taxon>
        <taxon>Pseudomonadati</taxon>
        <taxon>Pseudomonadota</taxon>
        <taxon>Gammaproteobacteria</taxon>
        <taxon>Pseudomonadales</taxon>
        <taxon>Pseudomonadaceae</taxon>
        <taxon>Pseudomonas</taxon>
    </lineage>
</organism>
<name>ALGD_PSEPK</name>
<protein>
    <recommendedName>
        <fullName>GDP-mannose 6-dehydrogenase</fullName>
        <shortName>GMD</shortName>
        <ecNumber>1.1.1.132</ecNumber>
    </recommendedName>
</protein>
<keyword id="KW-0016">Alginate biosynthesis</keyword>
<keyword id="KW-0520">NAD</keyword>
<keyword id="KW-0560">Oxidoreductase</keyword>
<keyword id="KW-1185">Reference proteome</keyword>
<feature type="chain" id="PRO_0000074068" description="GDP-mannose 6-dehydrogenase">
    <location>
        <begin position="1"/>
        <end position="438"/>
    </location>
</feature>
<feature type="active site" evidence="1">
    <location>
        <position position="268"/>
    </location>
</feature>
<feature type="binding site" description="in chain A" evidence="2">
    <location>
        <position position="10"/>
    </location>
    <ligand>
        <name>NAD(+)</name>
        <dbReference type="ChEBI" id="CHEBI:57540"/>
        <note>ligand shared between homodimeric partners</note>
    </ligand>
</feature>
<feature type="binding site" description="in chain A" evidence="2">
    <location>
        <position position="11"/>
    </location>
    <ligand>
        <name>NAD(+)</name>
        <dbReference type="ChEBI" id="CHEBI:57540"/>
        <note>ligand shared between homodimeric partners</note>
    </ligand>
</feature>
<feature type="binding site" description="in chain A" evidence="2">
    <location>
        <position position="30"/>
    </location>
    <ligand>
        <name>NAD(+)</name>
        <dbReference type="ChEBI" id="CHEBI:57540"/>
        <note>ligand shared between homodimeric partners</note>
    </ligand>
</feature>
<feature type="binding site" description="in chain A" evidence="2">
    <location>
        <position position="35"/>
    </location>
    <ligand>
        <name>NAD(+)</name>
        <dbReference type="ChEBI" id="CHEBI:57540"/>
        <note>ligand shared between homodimeric partners</note>
    </ligand>
</feature>
<feature type="binding site" description="in chain A" evidence="2">
    <location>
        <position position="86"/>
    </location>
    <ligand>
        <name>NAD(+)</name>
        <dbReference type="ChEBI" id="CHEBI:57540"/>
        <note>ligand shared between homodimeric partners</note>
    </ligand>
</feature>
<feature type="binding site" description="in chain A" evidence="2">
    <location>
        <position position="124"/>
    </location>
    <ligand>
        <name>NAD(+)</name>
        <dbReference type="ChEBI" id="CHEBI:57540"/>
        <note>ligand shared between homodimeric partners</note>
    </ligand>
</feature>
<feature type="binding site" description="in chain A" evidence="2">
    <location>
        <position position="161"/>
    </location>
    <ligand>
        <name>GDP-alpha-D-mannuronate</name>
        <dbReference type="ChEBI" id="CHEBI:84886"/>
        <note>ligand shared between homodimeric partners</note>
    </ligand>
</feature>
<feature type="binding site" description="in chain A" evidence="2">
    <location>
        <position position="210"/>
    </location>
    <ligand>
        <name>GDP-alpha-D-mannuronate</name>
        <dbReference type="ChEBI" id="CHEBI:84886"/>
        <note>ligand shared between homodimeric partners</note>
    </ligand>
</feature>
<feature type="binding site" description="in chain A" evidence="2">
    <location>
        <position position="214"/>
    </location>
    <ligand>
        <name>GDP-alpha-D-mannuronate</name>
        <dbReference type="ChEBI" id="CHEBI:84886"/>
        <note>ligand shared between homodimeric partners</note>
    </ligand>
</feature>
<feature type="binding site" description="in chain A" evidence="2">
    <location>
        <position position="217"/>
    </location>
    <ligand>
        <name>GDP-alpha-D-mannuronate</name>
        <dbReference type="ChEBI" id="CHEBI:84886"/>
        <note>ligand shared between homodimeric partners</note>
    </ligand>
</feature>
<feature type="binding site" description="in chain A" evidence="2">
    <location>
        <position position="225"/>
    </location>
    <ligand>
        <name>GDP-alpha-D-mannuronate</name>
        <dbReference type="ChEBI" id="CHEBI:84886"/>
        <note>ligand shared between homodimeric partners</note>
    </ligand>
</feature>
<feature type="binding site" description="in chain B" evidence="2">
    <location>
        <position position="256"/>
    </location>
    <ligand>
        <name>GDP-alpha-D-mannuronate</name>
        <dbReference type="ChEBI" id="CHEBI:84886"/>
        <note>ligand shared between homodimeric partners</note>
    </ligand>
</feature>
<feature type="binding site" description="in chain B" evidence="2">
    <location>
        <position position="257"/>
    </location>
    <ligand>
        <name>GDP-alpha-D-mannuronate</name>
        <dbReference type="ChEBI" id="CHEBI:84886"/>
        <note>ligand shared between homodimeric partners</note>
    </ligand>
</feature>
<feature type="binding site" description="in chain B" evidence="2">
    <location>
        <position position="259"/>
    </location>
    <ligand>
        <name>GDP-alpha-D-mannuronate</name>
        <dbReference type="ChEBI" id="CHEBI:84886"/>
        <note>ligand shared between homodimeric partners</note>
    </ligand>
</feature>
<feature type="binding site" description="in chain B" evidence="2">
    <location>
        <position position="262"/>
    </location>
    <ligand>
        <name>GDP-alpha-D-mannuronate</name>
        <dbReference type="ChEBI" id="CHEBI:84886"/>
        <note>ligand shared between homodimeric partners</note>
    </ligand>
</feature>
<feature type="binding site" description="in chain B" evidence="2">
    <location>
        <position position="265"/>
    </location>
    <ligand>
        <name>GDP-alpha-D-mannuronate</name>
        <dbReference type="ChEBI" id="CHEBI:84886"/>
        <note>ligand shared between homodimeric partners</note>
    </ligand>
</feature>
<feature type="binding site" description="in chain B" evidence="2">
    <location>
        <position position="271"/>
    </location>
    <ligand>
        <name>NAD(+)</name>
        <dbReference type="ChEBI" id="CHEBI:57540"/>
        <note>ligand shared between homodimeric partners</note>
    </ligand>
</feature>
<feature type="binding site" description="in chain B" evidence="2">
    <location>
        <position position="324"/>
    </location>
    <ligand>
        <name>GDP-alpha-D-mannuronate</name>
        <dbReference type="ChEBI" id="CHEBI:84886"/>
        <note>ligand shared between homodimeric partners</note>
    </ligand>
</feature>
<feature type="binding site" description="in chain B" evidence="2">
    <location>
        <position position="331"/>
    </location>
    <ligand>
        <name>NAD(+)</name>
        <dbReference type="ChEBI" id="CHEBI:57540"/>
        <note>ligand shared between homodimeric partners</note>
    </ligand>
</feature>
<evidence type="ECO:0000250" key="1"/>
<evidence type="ECO:0000250" key="2">
    <source>
        <dbReference type="UniProtKB" id="P11759"/>
    </source>
</evidence>
<evidence type="ECO:0000305" key="3"/>
<reference key="1">
    <citation type="journal article" date="2002" name="Environ. Microbiol.">
        <title>Complete genome sequence and comparative analysis of the metabolically versatile Pseudomonas putida KT2440.</title>
        <authorList>
            <person name="Nelson K.E."/>
            <person name="Weinel C."/>
            <person name="Paulsen I.T."/>
            <person name="Dodson R.J."/>
            <person name="Hilbert H."/>
            <person name="Martins dos Santos V.A.P."/>
            <person name="Fouts D.E."/>
            <person name="Gill S.R."/>
            <person name="Pop M."/>
            <person name="Holmes M."/>
            <person name="Brinkac L.M."/>
            <person name="Beanan M.J."/>
            <person name="DeBoy R.T."/>
            <person name="Daugherty S.C."/>
            <person name="Kolonay J.F."/>
            <person name="Madupu R."/>
            <person name="Nelson W.C."/>
            <person name="White O."/>
            <person name="Peterson J.D."/>
            <person name="Khouri H.M."/>
            <person name="Hance I."/>
            <person name="Chris Lee P."/>
            <person name="Holtzapple E.K."/>
            <person name="Scanlan D."/>
            <person name="Tran K."/>
            <person name="Moazzez A."/>
            <person name="Utterback T.R."/>
            <person name="Rizzo M."/>
            <person name="Lee K."/>
            <person name="Kosack D."/>
            <person name="Moestl D."/>
            <person name="Wedler H."/>
            <person name="Lauber J."/>
            <person name="Stjepandic D."/>
            <person name="Hoheisel J."/>
            <person name="Straetz M."/>
            <person name="Heim S."/>
            <person name="Kiewitz C."/>
            <person name="Eisen J.A."/>
            <person name="Timmis K.N."/>
            <person name="Duesterhoeft A."/>
            <person name="Tuemmler B."/>
            <person name="Fraser C.M."/>
        </authorList>
    </citation>
    <scope>NUCLEOTIDE SEQUENCE [LARGE SCALE GENOMIC DNA]</scope>
    <source>
        <strain>ATCC 47054 / DSM 6125 / CFBP 8728 / NCIMB 11950 / KT2440</strain>
    </source>
</reference>
<dbReference type="EC" id="1.1.1.132"/>
<dbReference type="EMBL" id="AE015451">
    <property type="protein sequence ID" value="AAN66912.1"/>
    <property type="molecule type" value="Genomic_DNA"/>
</dbReference>
<dbReference type="RefSeq" id="NP_743448.1">
    <property type="nucleotide sequence ID" value="NC_002947.4"/>
</dbReference>
<dbReference type="RefSeq" id="WP_010952417.1">
    <property type="nucleotide sequence ID" value="NZ_CP169744.1"/>
</dbReference>
<dbReference type="SMR" id="Q88NC4"/>
<dbReference type="STRING" id="160488.PP_1288"/>
<dbReference type="PaxDb" id="160488-PP_1288"/>
<dbReference type="KEGG" id="ppu:PP_1288"/>
<dbReference type="PATRIC" id="fig|160488.4.peg.1365"/>
<dbReference type="eggNOG" id="COG1004">
    <property type="taxonomic scope" value="Bacteria"/>
</dbReference>
<dbReference type="HOGENOM" id="CLU_023810_1_1_6"/>
<dbReference type="OrthoDB" id="9803238at2"/>
<dbReference type="PhylomeDB" id="Q88NC4"/>
<dbReference type="BioCyc" id="PPUT160488:G1G01-1375-MONOMER"/>
<dbReference type="UniPathway" id="UPA00286"/>
<dbReference type="Proteomes" id="UP000000556">
    <property type="component" value="Chromosome"/>
</dbReference>
<dbReference type="GO" id="GO:0047919">
    <property type="term" value="F:GDP-mannose 6-dehydrogenase activity"/>
    <property type="evidence" value="ECO:0007669"/>
    <property type="project" value="UniProtKB-EC"/>
</dbReference>
<dbReference type="GO" id="GO:0051287">
    <property type="term" value="F:NAD binding"/>
    <property type="evidence" value="ECO:0007669"/>
    <property type="project" value="InterPro"/>
</dbReference>
<dbReference type="GO" id="GO:0042121">
    <property type="term" value="P:alginic acid biosynthetic process"/>
    <property type="evidence" value="ECO:0007669"/>
    <property type="project" value="UniProtKB-UniPathway"/>
</dbReference>
<dbReference type="Gene3D" id="1.20.5.170">
    <property type="match status" value="1"/>
</dbReference>
<dbReference type="Gene3D" id="3.40.50.720">
    <property type="entry name" value="NAD(P)-binding Rossmann-like Domain"/>
    <property type="match status" value="2"/>
</dbReference>
<dbReference type="InterPro" id="IPR008927">
    <property type="entry name" value="6-PGluconate_DH-like_C_sf"/>
</dbReference>
<dbReference type="InterPro" id="IPR028358">
    <property type="entry name" value="GDPman_DH"/>
</dbReference>
<dbReference type="InterPro" id="IPR036291">
    <property type="entry name" value="NAD(P)-bd_dom_sf"/>
</dbReference>
<dbReference type="InterPro" id="IPR017476">
    <property type="entry name" value="UDP-Glc/GDP-Man"/>
</dbReference>
<dbReference type="InterPro" id="IPR014027">
    <property type="entry name" value="UDP-Glc/GDP-Man_DH_C"/>
</dbReference>
<dbReference type="InterPro" id="IPR036220">
    <property type="entry name" value="UDP-Glc/GDP-Man_DH_C_sf"/>
</dbReference>
<dbReference type="InterPro" id="IPR014026">
    <property type="entry name" value="UDP-Glc/GDP-Man_DH_dimer"/>
</dbReference>
<dbReference type="InterPro" id="IPR001732">
    <property type="entry name" value="UDP-Glc/GDP-Man_DH_N"/>
</dbReference>
<dbReference type="NCBIfam" id="TIGR03026">
    <property type="entry name" value="NDP-sugDHase"/>
    <property type="match status" value="1"/>
</dbReference>
<dbReference type="PANTHER" id="PTHR43750:SF1">
    <property type="entry name" value="GDP-MANNOSE 6-DEHYDROGENASE"/>
    <property type="match status" value="1"/>
</dbReference>
<dbReference type="PANTHER" id="PTHR43750">
    <property type="entry name" value="UDP-GLUCOSE 6-DEHYDROGENASE TUAD"/>
    <property type="match status" value="1"/>
</dbReference>
<dbReference type="Pfam" id="PF00984">
    <property type="entry name" value="UDPG_MGDP_dh"/>
    <property type="match status" value="1"/>
</dbReference>
<dbReference type="Pfam" id="PF03720">
    <property type="entry name" value="UDPG_MGDP_dh_C"/>
    <property type="match status" value="1"/>
</dbReference>
<dbReference type="Pfam" id="PF03721">
    <property type="entry name" value="UDPG_MGDP_dh_N"/>
    <property type="match status" value="1"/>
</dbReference>
<dbReference type="PIRSF" id="PIRSF500135">
    <property type="entry name" value="GDPman_DH"/>
    <property type="match status" value="1"/>
</dbReference>
<dbReference type="PIRSF" id="PIRSF000124">
    <property type="entry name" value="UDPglc_GDPman_dh"/>
    <property type="match status" value="1"/>
</dbReference>
<dbReference type="SMART" id="SM00984">
    <property type="entry name" value="UDPG_MGDP_dh_C"/>
    <property type="match status" value="1"/>
</dbReference>
<dbReference type="SUPFAM" id="SSF48179">
    <property type="entry name" value="6-phosphogluconate dehydrogenase C-terminal domain-like"/>
    <property type="match status" value="1"/>
</dbReference>
<dbReference type="SUPFAM" id="SSF51735">
    <property type="entry name" value="NAD(P)-binding Rossmann-fold domains"/>
    <property type="match status" value="1"/>
</dbReference>
<dbReference type="SUPFAM" id="SSF52413">
    <property type="entry name" value="UDP-glucose/GDP-mannose dehydrogenase C-terminal domain"/>
    <property type="match status" value="1"/>
</dbReference>